<keyword id="KW-0488">Methylation</keyword>
<keyword id="KW-0687">Ribonucleoprotein</keyword>
<keyword id="KW-0689">Ribosomal protein</keyword>
<keyword id="KW-0694">RNA-binding</keyword>
<keyword id="KW-0699">rRNA-binding</keyword>
<reference key="1">
    <citation type="submission" date="2008-01" db="EMBL/GenBank/DDBJ databases">
        <title>Complete sequence of Thermoanaerobacter sp. X514.</title>
        <authorList>
            <consortium name="US DOE Joint Genome Institute"/>
            <person name="Copeland A."/>
            <person name="Lucas S."/>
            <person name="Lapidus A."/>
            <person name="Barry K."/>
            <person name="Glavina del Rio T."/>
            <person name="Dalin E."/>
            <person name="Tice H."/>
            <person name="Pitluck S."/>
            <person name="Bruce D."/>
            <person name="Goodwin L."/>
            <person name="Saunders E."/>
            <person name="Brettin T."/>
            <person name="Detter J.C."/>
            <person name="Han C."/>
            <person name="Schmutz J."/>
            <person name="Larimer F."/>
            <person name="Land M."/>
            <person name="Hauser L."/>
            <person name="Kyrpides N."/>
            <person name="Kim E."/>
            <person name="Hemme C."/>
            <person name="Fields M.W."/>
            <person name="He Z."/>
            <person name="Zhou J."/>
            <person name="Richardson P."/>
        </authorList>
    </citation>
    <scope>NUCLEOTIDE SEQUENCE [LARGE SCALE GENOMIC DNA]</scope>
    <source>
        <strain>X514</strain>
    </source>
</reference>
<sequence length="140" mass="14838">MAKKVAAVVKIQLPAGKATPAPPVGTALGPHGVNIMAFCKEFNERTAKDAGLIIPVVITIYADRSFSFITKTPPAAVLLKKAAGIESGSPQPNKQKVGKITREQLREIAEIKMKDLNASDIEAAMRMIAGTARSMGIEIV</sequence>
<evidence type="ECO:0000255" key="1">
    <source>
        <dbReference type="HAMAP-Rule" id="MF_00736"/>
    </source>
</evidence>
<evidence type="ECO:0000305" key="2"/>
<gene>
    <name evidence="1" type="primary">rplK</name>
    <name type="ordered locus">Teth514_0855</name>
</gene>
<organism>
    <name type="scientific">Thermoanaerobacter sp. (strain X514)</name>
    <dbReference type="NCBI Taxonomy" id="399726"/>
    <lineage>
        <taxon>Bacteria</taxon>
        <taxon>Bacillati</taxon>
        <taxon>Bacillota</taxon>
        <taxon>Clostridia</taxon>
        <taxon>Thermoanaerobacterales</taxon>
        <taxon>Thermoanaerobacteraceae</taxon>
        <taxon>Thermoanaerobacter</taxon>
    </lineage>
</organism>
<comment type="function">
    <text evidence="1">Forms part of the ribosomal stalk which helps the ribosome interact with GTP-bound translation factors.</text>
</comment>
<comment type="subunit">
    <text evidence="1">Part of the ribosomal stalk of the 50S ribosomal subunit. Interacts with L10 and the large rRNA to form the base of the stalk. L10 forms an elongated spine to which L12 dimers bind in a sequential fashion forming a multimeric L10(L12)X complex.</text>
</comment>
<comment type="PTM">
    <text evidence="1">One or more lysine residues are methylated.</text>
</comment>
<comment type="similarity">
    <text evidence="1">Belongs to the universal ribosomal protein uL11 family.</text>
</comment>
<dbReference type="EMBL" id="CP000923">
    <property type="protein sequence ID" value="ABY92157.1"/>
    <property type="molecule type" value="Genomic_DNA"/>
</dbReference>
<dbReference type="RefSeq" id="WP_003868695.1">
    <property type="nucleotide sequence ID" value="NC_010320.1"/>
</dbReference>
<dbReference type="SMR" id="B0K5G4"/>
<dbReference type="KEGG" id="tex:Teth514_0855"/>
<dbReference type="HOGENOM" id="CLU_074237_2_1_9"/>
<dbReference type="Proteomes" id="UP000002155">
    <property type="component" value="Chromosome"/>
</dbReference>
<dbReference type="GO" id="GO:0022625">
    <property type="term" value="C:cytosolic large ribosomal subunit"/>
    <property type="evidence" value="ECO:0007669"/>
    <property type="project" value="TreeGrafter"/>
</dbReference>
<dbReference type="GO" id="GO:0070180">
    <property type="term" value="F:large ribosomal subunit rRNA binding"/>
    <property type="evidence" value="ECO:0007669"/>
    <property type="project" value="UniProtKB-UniRule"/>
</dbReference>
<dbReference type="GO" id="GO:0003735">
    <property type="term" value="F:structural constituent of ribosome"/>
    <property type="evidence" value="ECO:0007669"/>
    <property type="project" value="InterPro"/>
</dbReference>
<dbReference type="GO" id="GO:0006412">
    <property type="term" value="P:translation"/>
    <property type="evidence" value="ECO:0007669"/>
    <property type="project" value="UniProtKB-UniRule"/>
</dbReference>
<dbReference type="CDD" id="cd00349">
    <property type="entry name" value="Ribosomal_L11"/>
    <property type="match status" value="1"/>
</dbReference>
<dbReference type="FunFam" id="1.10.10.250:FF:000001">
    <property type="entry name" value="50S ribosomal protein L11"/>
    <property type="match status" value="1"/>
</dbReference>
<dbReference type="FunFam" id="3.30.1550.10:FF:000001">
    <property type="entry name" value="50S ribosomal protein L11"/>
    <property type="match status" value="1"/>
</dbReference>
<dbReference type="Gene3D" id="1.10.10.250">
    <property type="entry name" value="Ribosomal protein L11, C-terminal domain"/>
    <property type="match status" value="1"/>
</dbReference>
<dbReference type="Gene3D" id="3.30.1550.10">
    <property type="entry name" value="Ribosomal protein L11/L12, N-terminal domain"/>
    <property type="match status" value="1"/>
</dbReference>
<dbReference type="HAMAP" id="MF_00736">
    <property type="entry name" value="Ribosomal_uL11"/>
    <property type="match status" value="1"/>
</dbReference>
<dbReference type="InterPro" id="IPR000911">
    <property type="entry name" value="Ribosomal_uL11"/>
</dbReference>
<dbReference type="InterPro" id="IPR006519">
    <property type="entry name" value="Ribosomal_uL11_bac-typ"/>
</dbReference>
<dbReference type="InterPro" id="IPR020783">
    <property type="entry name" value="Ribosomal_uL11_C"/>
</dbReference>
<dbReference type="InterPro" id="IPR036769">
    <property type="entry name" value="Ribosomal_uL11_C_sf"/>
</dbReference>
<dbReference type="InterPro" id="IPR020784">
    <property type="entry name" value="Ribosomal_uL11_N"/>
</dbReference>
<dbReference type="InterPro" id="IPR036796">
    <property type="entry name" value="Ribosomal_uL11_N_sf"/>
</dbReference>
<dbReference type="NCBIfam" id="TIGR01632">
    <property type="entry name" value="L11_bact"/>
    <property type="match status" value="1"/>
</dbReference>
<dbReference type="PANTHER" id="PTHR11661">
    <property type="entry name" value="60S RIBOSOMAL PROTEIN L12"/>
    <property type="match status" value="1"/>
</dbReference>
<dbReference type="PANTHER" id="PTHR11661:SF1">
    <property type="entry name" value="LARGE RIBOSOMAL SUBUNIT PROTEIN UL11M"/>
    <property type="match status" value="1"/>
</dbReference>
<dbReference type="Pfam" id="PF00298">
    <property type="entry name" value="Ribosomal_L11"/>
    <property type="match status" value="1"/>
</dbReference>
<dbReference type="Pfam" id="PF03946">
    <property type="entry name" value="Ribosomal_L11_N"/>
    <property type="match status" value="1"/>
</dbReference>
<dbReference type="SMART" id="SM00649">
    <property type="entry name" value="RL11"/>
    <property type="match status" value="1"/>
</dbReference>
<dbReference type="SUPFAM" id="SSF54747">
    <property type="entry name" value="Ribosomal L11/L12e N-terminal domain"/>
    <property type="match status" value="1"/>
</dbReference>
<dbReference type="SUPFAM" id="SSF46906">
    <property type="entry name" value="Ribosomal protein L11, C-terminal domain"/>
    <property type="match status" value="1"/>
</dbReference>
<accession>B0K5G4</accession>
<protein>
    <recommendedName>
        <fullName evidence="1">Large ribosomal subunit protein uL11</fullName>
    </recommendedName>
    <alternativeName>
        <fullName evidence="2">50S ribosomal protein L11</fullName>
    </alternativeName>
</protein>
<proteinExistence type="inferred from homology"/>
<feature type="chain" id="PRO_1000195736" description="Large ribosomal subunit protein uL11">
    <location>
        <begin position="1"/>
        <end position="140"/>
    </location>
</feature>
<name>RL11_THEPX</name>